<organism>
    <name type="scientific">Rhodopseudomonas palustris (strain HaA2)</name>
    <dbReference type="NCBI Taxonomy" id="316058"/>
    <lineage>
        <taxon>Bacteria</taxon>
        <taxon>Pseudomonadati</taxon>
        <taxon>Pseudomonadota</taxon>
        <taxon>Alphaproteobacteria</taxon>
        <taxon>Hyphomicrobiales</taxon>
        <taxon>Nitrobacteraceae</taxon>
        <taxon>Rhodopseudomonas</taxon>
    </lineage>
</organism>
<dbReference type="EC" id="2.1.1.45" evidence="1"/>
<dbReference type="EMBL" id="CP000250">
    <property type="protein sequence ID" value="ABD06743.1"/>
    <property type="molecule type" value="Genomic_DNA"/>
</dbReference>
<dbReference type="RefSeq" id="WP_011440931.1">
    <property type="nucleotide sequence ID" value="NC_007778.1"/>
</dbReference>
<dbReference type="SMR" id="Q2IYG7"/>
<dbReference type="STRING" id="316058.RPB_2036"/>
<dbReference type="KEGG" id="rpb:RPB_2036"/>
<dbReference type="eggNOG" id="COG0207">
    <property type="taxonomic scope" value="Bacteria"/>
</dbReference>
<dbReference type="HOGENOM" id="CLU_021669_0_0_5"/>
<dbReference type="OrthoDB" id="9774633at2"/>
<dbReference type="UniPathway" id="UPA00575"/>
<dbReference type="Proteomes" id="UP000008809">
    <property type="component" value="Chromosome"/>
</dbReference>
<dbReference type="GO" id="GO:0005829">
    <property type="term" value="C:cytosol"/>
    <property type="evidence" value="ECO:0007669"/>
    <property type="project" value="TreeGrafter"/>
</dbReference>
<dbReference type="GO" id="GO:0004799">
    <property type="term" value="F:thymidylate synthase activity"/>
    <property type="evidence" value="ECO:0007669"/>
    <property type="project" value="UniProtKB-UniRule"/>
</dbReference>
<dbReference type="GO" id="GO:0006231">
    <property type="term" value="P:dTMP biosynthetic process"/>
    <property type="evidence" value="ECO:0007669"/>
    <property type="project" value="UniProtKB-UniRule"/>
</dbReference>
<dbReference type="GO" id="GO:0006235">
    <property type="term" value="P:dTTP biosynthetic process"/>
    <property type="evidence" value="ECO:0007669"/>
    <property type="project" value="UniProtKB-UniRule"/>
</dbReference>
<dbReference type="GO" id="GO:0032259">
    <property type="term" value="P:methylation"/>
    <property type="evidence" value="ECO:0007669"/>
    <property type="project" value="UniProtKB-KW"/>
</dbReference>
<dbReference type="CDD" id="cd00351">
    <property type="entry name" value="TS_Pyrimidine_HMase"/>
    <property type="match status" value="1"/>
</dbReference>
<dbReference type="FunFam" id="3.30.572.10:FF:000001">
    <property type="entry name" value="Thymidylate synthase"/>
    <property type="match status" value="1"/>
</dbReference>
<dbReference type="Gene3D" id="3.30.572.10">
    <property type="entry name" value="Thymidylate synthase/dCMP hydroxymethylase domain"/>
    <property type="match status" value="1"/>
</dbReference>
<dbReference type="HAMAP" id="MF_00008">
    <property type="entry name" value="Thymidy_synth_bact"/>
    <property type="match status" value="1"/>
</dbReference>
<dbReference type="InterPro" id="IPR045097">
    <property type="entry name" value="Thymidate_synth/dCMP_Mease"/>
</dbReference>
<dbReference type="InterPro" id="IPR023451">
    <property type="entry name" value="Thymidate_synth/dCMP_Mease_dom"/>
</dbReference>
<dbReference type="InterPro" id="IPR036926">
    <property type="entry name" value="Thymidate_synth/dCMP_Mease_sf"/>
</dbReference>
<dbReference type="InterPro" id="IPR000398">
    <property type="entry name" value="Thymidylate_synthase"/>
</dbReference>
<dbReference type="InterPro" id="IPR020940">
    <property type="entry name" value="Thymidylate_synthase_AS"/>
</dbReference>
<dbReference type="NCBIfam" id="NF002497">
    <property type="entry name" value="PRK01827.1-3"/>
    <property type="match status" value="1"/>
</dbReference>
<dbReference type="NCBIfam" id="NF002499">
    <property type="entry name" value="PRK01827.1-5"/>
    <property type="match status" value="1"/>
</dbReference>
<dbReference type="NCBIfam" id="TIGR03284">
    <property type="entry name" value="thym_sym"/>
    <property type="match status" value="2"/>
</dbReference>
<dbReference type="PANTHER" id="PTHR11548:SF9">
    <property type="entry name" value="THYMIDYLATE SYNTHASE"/>
    <property type="match status" value="1"/>
</dbReference>
<dbReference type="PANTHER" id="PTHR11548">
    <property type="entry name" value="THYMIDYLATE SYNTHASE 1"/>
    <property type="match status" value="1"/>
</dbReference>
<dbReference type="Pfam" id="PF00303">
    <property type="entry name" value="Thymidylat_synt"/>
    <property type="match status" value="1"/>
</dbReference>
<dbReference type="PRINTS" id="PR00108">
    <property type="entry name" value="THYMDSNTHASE"/>
</dbReference>
<dbReference type="SUPFAM" id="SSF55831">
    <property type="entry name" value="Thymidylate synthase/dCMP hydroxymethylase"/>
    <property type="match status" value="1"/>
</dbReference>
<dbReference type="PROSITE" id="PS00091">
    <property type="entry name" value="THYMIDYLATE_SYNTHASE"/>
    <property type="match status" value="1"/>
</dbReference>
<feature type="chain" id="PRO_1000000659" description="Thymidylate synthase">
    <location>
        <begin position="1"/>
        <end position="264"/>
    </location>
</feature>
<feature type="active site" description="Nucleophile" evidence="1">
    <location>
        <position position="146"/>
    </location>
</feature>
<feature type="binding site" description="in other chain" evidence="1">
    <location>
        <position position="21"/>
    </location>
    <ligand>
        <name>dUMP</name>
        <dbReference type="ChEBI" id="CHEBI:246422"/>
        <note>ligand shared between dimeric partners</note>
    </ligand>
</feature>
<feature type="binding site" evidence="1">
    <location>
        <begin position="126"/>
        <end position="127"/>
    </location>
    <ligand>
        <name>dUMP</name>
        <dbReference type="ChEBI" id="CHEBI:246422"/>
        <note>ligand shared between dimeric partners</note>
    </ligand>
</feature>
<feature type="binding site" description="in other chain" evidence="1">
    <location>
        <begin position="166"/>
        <end position="169"/>
    </location>
    <ligand>
        <name>dUMP</name>
        <dbReference type="ChEBI" id="CHEBI:246422"/>
        <note>ligand shared between dimeric partners</note>
    </ligand>
</feature>
<feature type="binding site" evidence="1">
    <location>
        <position position="169"/>
    </location>
    <ligand>
        <name>(6R)-5,10-methylene-5,6,7,8-tetrahydrofolate</name>
        <dbReference type="ChEBI" id="CHEBI:15636"/>
    </ligand>
</feature>
<feature type="binding site" description="in other chain" evidence="1">
    <location>
        <position position="177"/>
    </location>
    <ligand>
        <name>dUMP</name>
        <dbReference type="ChEBI" id="CHEBI:246422"/>
        <note>ligand shared between dimeric partners</note>
    </ligand>
</feature>
<feature type="binding site" description="in other chain" evidence="1">
    <location>
        <begin position="207"/>
        <end position="209"/>
    </location>
    <ligand>
        <name>dUMP</name>
        <dbReference type="ChEBI" id="CHEBI:246422"/>
        <note>ligand shared between dimeric partners</note>
    </ligand>
</feature>
<feature type="binding site" evidence="1">
    <location>
        <position position="263"/>
    </location>
    <ligand>
        <name>(6R)-5,10-methylene-5,6,7,8-tetrahydrofolate</name>
        <dbReference type="ChEBI" id="CHEBI:15636"/>
    </ligand>
</feature>
<sequence>MIPYHDLLERILSDGAEKHDRTGTGTLSVFGHQLRFDLAAGFPMLTTKRLPLKAIIHELLWFLQGDTNIKYLHDHGVTIWDEWADANGDLGPVYGAQWRSWPTADGRSIDQIAHVVDMIRRNPDSRRLIVTAWNPADVEKMALPPCHCLFQFYVANGRLSCQLYQRSADVFLGVPFNIASYALLTMMVAQVTGLKPGDFIHTLGDAHLYSNHLEQARLQLTRAPRALPAMAINPAVTDIFGFRYEDFTLHGYDPHPHIKAEVAV</sequence>
<comment type="function">
    <text evidence="1">Catalyzes the reductive methylation of 2'-deoxyuridine-5'-monophosphate (dUMP) to 2'-deoxythymidine-5'-monophosphate (dTMP) while utilizing 5,10-methylenetetrahydrofolate (mTHF) as the methyl donor and reductant in the reaction, yielding dihydrofolate (DHF) as a by-product. This enzymatic reaction provides an intracellular de novo source of dTMP, an essential precursor for DNA biosynthesis.</text>
</comment>
<comment type="catalytic activity">
    <reaction evidence="1">
        <text>dUMP + (6R)-5,10-methylene-5,6,7,8-tetrahydrofolate = 7,8-dihydrofolate + dTMP</text>
        <dbReference type="Rhea" id="RHEA:12104"/>
        <dbReference type="ChEBI" id="CHEBI:15636"/>
        <dbReference type="ChEBI" id="CHEBI:57451"/>
        <dbReference type="ChEBI" id="CHEBI:63528"/>
        <dbReference type="ChEBI" id="CHEBI:246422"/>
        <dbReference type="EC" id="2.1.1.45"/>
    </reaction>
</comment>
<comment type="pathway">
    <text evidence="1">Pyrimidine metabolism; dTTP biosynthesis.</text>
</comment>
<comment type="subunit">
    <text evidence="1">Homodimer.</text>
</comment>
<comment type="subcellular location">
    <subcellularLocation>
        <location evidence="1">Cytoplasm</location>
    </subcellularLocation>
</comment>
<comment type="similarity">
    <text evidence="1">Belongs to the thymidylate synthase family. Bacterial-type ThyA subfamily.</text>
</comment>
<keyword id="KW-0963">Cytoplasm</keyword>
<keyword id="KW-0489">Methyltransferase</keyword>
<keyword id="KW-0545">Nucleotide biosynthesis</keyword>
<keyword id="KW-1185">Reference proteome</keyword>
<keyword id="KW-0808">Transferase</keyword>
<gene>
    <name evidence="1" type="primary">thyA</name>
    <name type="ordered locus">RPB_2036</name>
</gene>
<name>TYSY_RHOP2</name>
<proteinExistence type="inferred from homology"/>
<reference key="1">
    <citation type="submission" date="2006-01" db="EMBL/GenBank/DDBJ databases">
        <title>Complete sequence of Rhodopseudomonas palustris HaA2.</title>
        <authorList>
            <consortium name="US DOE Joint Genome Institute"/>
            <person name="Copeland A."/>
            <person name="Lucas S."/>
            <person name="Lapidus A."/>
            <person name="Barry K."/>
            <person name="Detter J.C."/>
            <person name="Glavina T."/>
            <person name="Hammon N."/>
            <person name="Israni S."/>
            <person name="Pitluck S."/>
            <person name="Chain P."/>
            <person name="Malfatti S."/>
            <person name="Shin M."/>
            <person name="Vergez L."/>
            <person name="Schmutz J."/>
            <person name="Larimer F."/>
            <person name="Land M."/>
            <person name="Hauser L."/>
            <person name="Pelletier D.A."/>
            <person name="Kyrpides N."/>
            <person name="Anderson I."/>
            <person name="Oda Y."/>
            <person name="Harwood C.S."/>
            <person name="Richardson P."/>
        </authorList>
    </citation>
    <scope>NUCLEOTIDE SEQUENCE [LARGE SCALE GENOMIC DNA]</scope>
    <source>
        <strain>HaA2</strain>
    </source>
</reference>
<protein>
    <recommendedName>
        <fullName evidence="1">Thymidylate synthase</fullName>
        <shortName evidence="1">TS</shortName>
        <shortName evidence="1">TSase</shortName>
        <ecNumber evidence="1">2.1.1.45</ecNumber>
    </recommendedName>
</protein>
<accession>Q2IYG7</accession>
<evidence type="ECO:0000255" key="1">
    <source>
        <dbReference type="HAMAP-Rule" id="MF_00008"/>
    </source>
</evidence>